<reference key="1">
    <citation type="journal article" date="2000" name="Nature">
        <title>DNA sequence of both chromosomes of the cholera pathogen Vibrio cholerae.</title>
        <authorList>
            <person name="Heidelberg J.F."/>
            <person name="Eisen J.A."/>
            <person name="Nelson W.C."/>
            <person name="Clayton R.A."/>
            <person name="Gwinn M.L."/>
            <person name="Dodson R.J."/>
            <person name="Haft D.H."/>
            <person name="Hickey E.K."/>
            <person name="Peterson J.D."/>
            <person name="Umayam L.A."/>
            <person name="Gill S.R."/>
            <person name="Nelson K.E."/>
            <person name="Read T.D."/>
            <person name="Tettelin H."/>
            <person name="Richardson D.L."/>
            <person name="Ermolaeva M.D."/>
            <person name="Vamathevan J.J."/>
            <person name="Bass S."/>
            <person name="Qin H."/>
            <person name="Dragoi I."/>
            <person name="Sellers P."/>
            <person name="McDonald L.A."/>
            <person name="Utterback T.R."/>
            <person name="Fleischmann R.D."/>
            <person name="Nierman W.C."/>
            <person name="White O."/>
            <person name="Salzberg S.L."/>
            <person name="Smith H.O."/>
            <person name="Colwell R.R."/>
            <person name="Mekalanos J.J."/>
            <person name="Venter J.C."/>
            <person name="Fraser C.M."/>
        </authorList>
    </citation>
    <scope>NUCLEOTIDE SEQUENCE [LARGE SCALE GENOMIC DNA]</scope>
    <source>
        <strain>ATCC 39315 / El Tor Inaba N16961</strain>
    </source>
</reference>
<accession>Q9KU62</accession>
<gene>
    <name type="ordered locus">VC_0661</name>
</gene>
<feature type="chain" id="PRO_0000387441" description="tRNA1(Val) (adenine(37)-N6)-methyltransferase">
    <location>
        <begin position="1"/>
        <end position="240"/>
    </location>
</feature>
<keyword id="KW-0963">Cytoplasm</keyword>
<keyword id="KW-0489">Methyltransferase</keyword>
<keyword id="KW-1185">Reference proteome</keyword>
<keyword id="KW-0949">S-adenosyl-L-methionine</keyword>
<keyword id="KW-0808">Transferase</keyword>
<keyword id="KW-0819">tRNA processing</keyword>
<evidence type="ECO:0000255" key="1">
    <source>
        <dbReference type="HAMAP-Rule" id="MF_01872"/>
    </source>
</evidence>
<name>TRMN6_VIBCH</name>
<dbReference type="EC" id="2.1.1.223" evidence="1"/>
<dbReference type="EMBL" id="AE003852">
    <property type="protein sequence ID" value="AAF93827.1"/>
    <property type="molecule type" value="Genomic_DNA"/>
</dbReference>
<dbReference type="PIR" id="G82295">
    <property type="entry name" value="G82295"/>
</dbReference>
<dbReference type="RefSeq" id="NP_230310.1">
    <property type="nucleotide sequence ID" value="NC_002505.1"/>
</dbReference>
<dbReference type="RefSeq" id="WP_000856169.1">
    <property type="nucleotide sequence ID" value="NZ_LT906614.1"/>
</dbReference>
<dbReference type="SMR" id="Q9KU62"/>
<dbReference type="STRING" id="243277.VC_0661"/>
<dbReference type="DNASU" id="2615451"/>
<dbReference type="EnsemblBacteria" id="AAF93827">
    <property type="protein sequence ID" value="AAF93827"/>
    <property type="gene ID" value="VC_0661"/>
</dbReference>
<dbReference type="KEGG" id="vch:VC_0661"/>
<dbReference type="PATRIC" id="fig|243277.26.peg.632"/>
<dbReference type="eggNOG" id="COG4123">
    <property type="taxonomic scope" value="Bacteria"/>
</dbReference>
<dbReference type="HOGENOM" id="CLU_061983_0_0_6"/>
<dbReference type="Proteomes" id="UP000000584">
    <property type="component" value="Chromosome 1"/>
</dbReference>
<dbReference type="GO" id="GO:0005737">
    <property type="term" value="C:cytoplasm"/>
    <property type="evidence" value="ECO:0007669"/>
    <property type="project" value="UniProtKB-SubCell"/>
</dbReference>
<dbReference type="GO" id="GO:0003676">
    <property type="term" value="F:nucleic acid binding"/>
    <property type="evidence" value="ECO:0007669"/>
    <property type="project" value="InterPro"/>
</dbReference>
<dbReference type="GO" id="GO:0016430">
    <property type="term" value="F:tRNA (adenine-N6)-methyltransferase activity"/>
    <property type="evidence" value="ECO:0007669"/>
    <property type="project" value="UniProtKB-UniRule"/>
</dbReference>
<dbReference type="GO" id="GO:0032259">
    <property type="term" value="P:methylation"/>
    <property type="evidence" value="ECO:0007669"/>
    <property type="project" value="UniProtKB-KW"/>
</dbReference>
<dbReference type="GO" id="GO:0008033">
    <property type="term" value="P:tRNA processing"/>
    <property type="evidence" value="ECO:0007669"/>
    <property type="project" value="UniProtKB-UniRule"/>
</dbReference>
<dbReference type="CDD" id="cd02440">
    <property type="entry name" value="AdoMet_MTases"/>
    <property type="match status" value="1"/>
</dbReference>
<dbReference type="Gene3D" id="3.40.50.150">
    <property type="entry name" value="Vaccinia Virus protein VP39"/>
    <property type="match status" value="1"/>
</dbReference>
<dbReference type="HAMAP" id="MF_01872">
    <property type="entry name" value="tRNA_methyltr_YfiC"/>
    <property type="match status" value="1"/>
</dbReference>
<dbReference type="InterPro" id="IPR002052">
    <property type="entry name" value="DNA_methylase_N6_adenine_CS"/>
</dbReference>
<dbReference type="InterPro" id="IPR029063">
    <property type="entry name" value="SAM-dependent_MTases_sf"/>
</dbReference>
<dbReference type="InterPro" id="IPR007848">
    <property type="entry name" value="Small_mtfrase_dom"/>
</dbReference>
<dbReference type="InterPro" id="IPR050210">
    <property type="entry name" value="tRNA_Adenine-N(6)_MTase"/>
</dbReference>
<dbReference type="InterPro" id="IPR022882">
    <property type="entry name" value="tRNA_adenine-N6_MeTrfase"/>
</dbReference>
<dbReference type="PANTHER" id="PTHR47739">
    <property type="entry name" value="TRNA1(VAL) (ADENINE(37)-N6)-METHYLTRANSFERASE"/>
    <property type="match status" value="1"/>
</dbReference>
<dbReference type="PANTHER" id="PTHR47739:SF1">
    <property type="entry name" value="TRNA1(VAL) (ADENINE(37)-N6)-METHYLTRANSFERASE"/>
    <property type="match status" value="1"/>
</dbReference>
<dbReference type="Pfam" id="PF05175">
    <property type="entry name" value="MTS"/>
    <property type="match status" value="1"/>
</dbReference>
<dbReference type="PRINTS" id="PR00507">
    <property type="entry name" value="N12N6MTFRASE"/>
</dbReference>
<dbReference type="SUPFAM" id="SSF53335">
    <property type="entry name" value="S-adenosyl-L-methionine-dependent methyltransferases"/>
    <property type="match status" value="1"/>
</dbReference>
<dbReference type="PROSITE" id="PS00092">
    <property type="entry name" value="N6_MTASE"/>
    <property type="match status" value="1"/>
</dbReference>
<proteinExistence type="inferred from homology"/>
<comment type="function">
    <text evidence="1">Specifically methylates the adenine in position 37 of tRNA(1)(Val) (anticodon cmo5UAC).</text>
</comment>
<comment type="catalytic activity">
    <reaction evidence="1">
        <text>adenosine(37) in tRNA1(Val) + S-adenosyl-L-methionine = N(6)-methyladenosine(37) in tRNA1(Val) + S-adenosyl-L-homocysteine + H(+)</text>
        <dbReference type="Rhea" id="RHEA:43160"/>
        <dbReference type="Rhea" id="RHEA-COMP:10369"/>
        <dbReference type="Rhea" id="RHEA-COMP:10370"/>
        <dbReference type="ChEBI" id="CHEBI:15378"/>
        <dbReference type="ChEBI" id="CHEBI:57856"/>
        <dbReference type="ChEBI" id="CHEBI:59789"/>
        <dbReference type="ChEBI" id="CHEBI:74411"/>
        <dbReference type="ChEBI" id="CHEBI:74449"/>
        <dbReference type="EC" id="2.1.1.223"/>
    </reaction>
</comment>
<comment type="subcellular location">
    <subcellularLocation>
        <location evidence="1">Cytoplasm</location>
    </subcellularLocation>
</comment>
<comment type="similarity">
    <text evidence="1">Belongs to the methyltransferase superfamily. tRNA (adenine-N(6)-)-methyltransferase family.</text>
</comment>
<protein>
    <recommendedName>
        <fullName evidence="1">tRNA1(Val) (adenine(37)-N6)-methyltransferase</fullName>
        <ecNumber evidence="1">2.1.1.223</ecNumber>
    </recommendedName>
    <alternativeName>
        <fullName evidence="1">tRNA m6A37 methyltransferase</fullName>
    </alternativeName>
</protein>
<sequence length="240" mass="27049">MKTNKLINKSFRFKQFSIEEGTCGMPISTDGVLLGSWAFSLSPTTILDIGCGTGLLSLMCAQRFPHAHITALDIEQTAYLAAEHNRQQSPWAERIECQHADILHWQPSKRFAAIICNPPYFNSGETAQHQVRATARHTISLQHQALIERLPQLLEPDGVASFILPKAEGEDFIALARQAGLFVGRYCQVQPTTDKPVHRLLFELHLSPCLPVETRLVIREQQGYSEAFCQLTRDFYLKMS</sequence>
<organism>
    <name type="scientific">Vibrio cholerae serotype O1 (strain ATCC 39315 / El Tor Inaba N16961)</name>
    <dbReference type="NCBI Taxonomy" id="243277"/>
    <lineage>
        <taxon>Bacteria</taxon>
        <taxon>Pseudomonadati</taxon>
        <taxon>Pseudomonadota</taxon>
        <taxon>Gammaproteobacteria</taxon>
        <taxon>Vibrionales</taxon>
        <taxon>Vibrionaceae</taxon>
        <taxon>Vibrio</taxon>
    </lineage>
</organism>